<reference key="1">
    <citation type="submission" date="2008-06" db="EMBL/GenBank/DDBJ databases">
        <title>Complete sequence of Stenotrophomonas maltophilia R551-3.</title>
        <authorList>
            <consortium name="US DOE Joint Genome Institute"/>
            <person name="Lucas S."/>
            <person name="Copeland A."/>
            <person name="Lapidus A."/>
            <person name="Glavina del Rio T."/>
            <person name="Dalin E."/>
            <person name="Tice H."/>
            <person name="Pitluck S."/>
            <person name="Chain P."/>
            <person name="Malfatti S."/>
            <person name="Shin M."/>
            <person name="Vergez L."/>
            <person name="Lang D."/>
            <person name="Schmutz J."/>
            <person name="Larimer F."/>
            <person name="Land M."/>
            <person name="Hauser L."/>
            <person name="Kyrpides N."/>
            <person name="Mikhailova N."/>
            <person name="Taghavi S."/>
            <person name="Monchy S."/>
            <person name="Newman L."/>
            <person name="Vangronsveld J."/>
            <person name="van der Lelie D."/>
            <person name="Richardson P."/>
        </authorList>
    </citation>
    <scope>NUCLEOTIDE SEQUENCE [LARGE SCALE GENOMIC DNA]</scope>
    <source>
        <strain>R551-3</strain>
    </source>
</reference>
<evidence type="ECO:0000255" key="1">
    <source>
        <dbReference type="HAMAP-Rule" id="MF_00333"/>
    </source>
</evidence>
<proteinExistence type="inferred from homology"/>
<accession>B4SNL7</accession>
<dbReference type="EC" id="1.3.3.3" evidence="1"/>
<dbReference type="EMBL" id="CP001111">
    <property type="protein sequence ID" value="ACF53637.1"/>
    <property type="molecule type" value="Genomic_DNA"/>
</dbReference>
<dbReference type="RefSeq" id="WP_012512487.1">
    <property type="nucleotide sequence ID" value="NC_011071.1"/>
</dbReference>
<dbReference type="SMR" id="B4SNL7"/>
<dbReference type="STRING" id="391008.Smal_3938"/>
<dbReference type="KEGG" id="smt:Smal_3938"/>
<dbReference type="eggNOG" id="COG0408">
    <property type="taxonomic scope" value="Bacteria"/>
</dbReference>
<dbReference type="HOGENOM" id="CLU_026169_0_1_6"/>
<dbReference type="OrthoDB" id="9777553at2"/>
<dbReference type="UniPathway" id="UPA00251">
    <property type="reaction ID" value="UER00322"/>
</dbReference>
<dbReference type="Proteomes" id="UP000001867">
    <property type="component" value="Chromosome"/>
</dbReference>
<dbReference type="GO" id="GO:0005737">
    <property type="term" value="C:cytoplasm"/>
    <property type="evidence" value="ECO:0007669"/>
    <property type="project" value="UniProtKB-SubCell"/>
</dbReference>
<dbReference type="GO" id="GO:0004109">
    <property type="term" value="F:coproporphyrinogen oxidase activity"/>
    <property type="evidence" value="ECO:0007669"/>
    <property type="project" value="UniProtKB-UniRule"/>
</dbReference>
<dbReference type="GO" id="GO:0046872">
    <property type="term" value="F:metal ion binding"/>
    <property type="evidence" value="ECO:0007669"/>
    <property type="project" value="UniProtKB-KW"/>
</dbReference>
<dbReference type="GO" id="GO:0042803">
    <property type="term" value="F:protein homodimerization activity"/>
    <property type="evidence" value="ECO:0000250"/>
    <property type="project" value="UniProtKB"/>
</dbReference>
<dbReference type="GO" id="GO:0006782">
    <property type="term" value="P:protoporphyrinogen IX biosynthetic process"/>
    <property type="evidence" value="ECO:0007669"/>
    <property type="project" value="UniProtKB-UniRule"/>
</dbReference>
<dbReference type="FunFam" id="3.40.1500.10:FF:000001">
    <property type="entry name" value="Oxygen-dependent coproporphyrinogen-III oxidase"/>
    <property type="match status" value="1"/>
</dbReference>
<dbReference type="Gene3D" id="3.40.1500.10">
    <property type="entry name" value="Coproporphyrinogen III oxidase, aerobic"/>
    <property type="match status" value="1"/>
</dbReference>
<dbReference type="HAMAP" id="MF_00333">
    <property type="entry name" value="Coprogen_oxidas"/>
    <property type="match status" value="1"/>
</dbReference>
<dbReference type="InterPro" id="IPR001260">
    <property type="entry name" value="Coprogen_oxidase_aer"/>
</dbReference>
<dbReference type="InterPro" id="IPR036406">
    <property type="entry name" value="Coprogen_oxidase_aer_sf"/>
</dbReference>
<dbReference type="InterPro" id="IPR018375">
    <property type="entry name" value="Coprogen_oxidase_CS"/>
</dbReference>
<dbReference type="NCBIfam" id="NF003727">
    <property type="entry name" value="PRK05330.1"/>
    <property type="match status" value="1"/>
</dbReference>
<dbReference type="PANTHER" id="PTHR10755">
    <property type="entry name" value="COPROPORPHYRINOGEN III OXIDASE, MITOCHONDRIAL"/>
    <property type="match status" value="1"/>
</dbReference>
<dbReference type="PANTHER" id="PTHR10755:SF0">
    <property type="entry name" value="OXYGEN-DEPENDENT COPROPORPHYRINOGEN-III OXIDASE, MITOCHONDRIAL"/>
    <property type="match status" value="1"/>
</dbReference>
<dbReference type="Pfam" id="PF01218">
    <property type="entry name" value="Coprogen_oxidas"/>
    <property type="match status" value="1"/>
</dbReference>
<dbReference type="PIRSF" id="PIRSF000166">
    <property type="entry name" value="Coproporphyri_ox"/>
    <property type="match status" value="1"/>
</dbReference>
<dbReference type="PRINTS" id="PR00073">
    <property type="entry name" value="COPRGNOXDASE"/>
</dbReference>
<dbReference type="SUPFAM" id="SSF102886">
    <property type="entry name" value="Coproporphyrinogen III oxidase"/>
    <property type="match status" value="1"/>
</dbReference>
<dbReference type="PROSITE" id="PS01021">
    <property type="entry name" value="COPROGEN_OXIDASE"/>
    <property type="match status" value="1"/>
</dbReference>
<organism>
    <name type="scientific">Stenotrophomonas maltophilia (strain R551-3)</name>
    <dbReference type="NCBI Taxonomy" id="391008"/>
    <lineage>
        <taxon>Bacteria</taxon>
        <taxon>Pseudomonadati</taxon>
        <taxon>Pseudomonadota</taxon>
        <taxon>Gammaproteobacteria</taxon>
        <taxon>Lysobacterales</taxon>
        <taxon>Lysobacteraceae</taxon>
        <taxon>Stenotrophomonas</taxon>
        <taxon>Stenotrophomonas maltophilia group</taxon>
    </lineage>
</organism>
<gene>
    <name evidence="1" type="primary">hemF</name>
    <name type="ordered locus">Smal_3938</name>
</gene>
<protein>
    <recommendedName>
        <fullName evidence="1">Oxygen-dependent coproporphyrinogen-III oxidase</fullName>
        <shortName evidence="1">CPO</shortName>
        <shortName evidence="1">Coprogen oxidase</shortName>
        <shortName evidence="1">Coproporphyrinogenase</shortName>
        <ecNumber evidence="1">1.3.3.3</ecNumber>
    </recommendedName>
</protein>
<keyword id="KW-0963">Cytoplasm</keyword>
<keyword id="KW-0350">Heme biosynthesis</keyword>
<keyword id="KW-0479">Metal-binding</keyword>
<keyword id="KW-0560">Oxidoreductase</keyword>
<keyword id="KW-0627">Porphyrin biosynthesis</keyword>
<sequence>MNEFERVRAYLTDLQDRICAAIEAADGQARFQEDLWQRAEGGGGRTRVLRDGAVFEQAGIGFSDVAGSRLPPSASANRPELAGASWRATGVSLVFHPLNPYVPTTHANVRFFQAQRDGEVVASWFGGGFDLTPFYPFDEDVQHWHRVARDLCAPFGDERYAAHKRWCDEYFFLRHRNETRGVGGLFFDDLHGDFERDFDYLRAVGDGFLDAYLPIVQQRKDTAYGEREREFQLYRRGRYVEFNLVYDRGTLFGLQSGGRSESILMSLPPRVRWEYGFNPEAGSAEARLADYLVPRDWL</sequence>
<feature type="chain" id="PRO_1000119830" description="Oxygen-dependent coproporphyrinogen-III oxidase">
    <location>
        <begin position="1"/>
        <end position="298"/>
    </location>
</feature>
<feature type="region of interest" description="Important for dimerization" evidence="1">
    <location>
        <begin position="239"/>
        <end position="274"/>
    </location>
</feature>
<feature type="active site" description="Proton donor" evidence="1">
    <location>
        <position position="106"/>
    </location>
</feature>
<feature type="binding site" evidence="1">
    <location>
        <position position="92"/>
    </location>
    <ligand>
        <name>substrate</name>
    </ligand>
</feature>
<feature type="binding site" evidence="1">
    <location>
        <position position="96"/>
    </location>
    <ligand>
        <name>a divalent metal cation</name>
        <dbReference type="ChEBI" id="CHEBI:60240"/>
    </ligand>
</feature>
<feature type="binding site" evidence="1">
    <location>
        <position position="106"/>
    </location>
    <ligand>
        <name>a divalent metal cation</name>
        <dbReference type="ChEBI" id="CHEBI:60240"/>
    </ligand>
</feature>
<feature type="binding site" evidence="1">
    <location>
        <begin position="108"/>
        <end position="110"/>
    </location>
    <ligand>
        <name>substrate</name>
    </ligand>
</feature>
<feature type="binding site" evidence="1">
    <location>
        <position position="145"/>
    </location>
    <ligand>
        <name>a divalent metal cation</name>
        <dbReference type="ChEBI" id="CHEBI:60240"/>
    </ligand>
</feature>
<feature type="binding site" evidence="1">
    <location>
        <position position="175"/>
    </location>
    <ligand>
        <name>a divalent metal cation</name>
        <dbReference type="ChEBI" id="CHEBI:60240"/>
    </ligand>
</feature>
<feature type="binding site" evidence="1">
    <location>
        <begin position="257"/>
        <end position="259"/>
    </location>
    <ligand>
        <name>substrate</name>
    </ligand>
</feature>
<feature type="site" description="Important for dimerization" evidence="1">
    <location>
        <position position="175"/>
    </location>
</feature>
<name>HEM6_STRM5</name>
<comment type="function">
    <text evidence="1">Involved in the heme biosynthesis. Catalyzes the aerobic oxidative decarboxylation of propionate groups of rings A and B of coproporphyrinogen-III to yield the vinyl groups in protoporphyrinogen-IX.</text>
</comment>
<comment type="catalytic activity">
    <reaction evidence="1">
        <text>coproporphyrinogen III + O2 + 2 H(+) = protoporphyrinogen IX + 2 CO2 + 2 H2O</text>
        <dbReference type="Rhea" id="RHEA:18257"/>
        <dbReference type="ChEBI" id="CHEBI:15377"/>
        <dbReference type="ChEBI" id="CHEBI:15378"/>
        <dbReference type="ChEBI" id="CHEBI:15379"/>
        <dbReference type="ChEBI" id="CHEBI:16526"/>
        <dbReference type="ChEBI" id="CHEBI:57307"/>
        <dbReference type="ChEBI" id="CHEBI:57309"/>
        <dbReference type="EC" id="1.3.3.3"/>
    </reaction>
</comment>
<comment type="cofactor">
    <cofactor evidence="1">
        <name>a divalent metal cation</name>
        <dbReference type="ChEBI" id="CHEBI:60240"/>
    </cofactor>
</comment>
<comment type="pathway">
    <text evidence="1">Porphyrin-containing compound metabolism; protoporphyrin-IX biosynthesis; protoporphyrinogen-IX from coproporphyrinogen-III (O2 route): step 1/1.</text>
</comment>
<comment type="subunit">
    <text evidence="1">Homodimer.</text>
</comment>
<comment type="subcellular location">
    <subcellularLocation>
        <location evidence="1">Cytoplasm</location>
    </subcellularLocation>
</comment>
<comment type="similarity">
    <text evidence="1">Belongs to the aerobic coproporphyrinogen-III oxidase family.</text>
</comment>